<proteinExistence type="inferred from homology"/>
<evidence type="ECO:0000255" key="1">
    <source>
        <dbReference type="HAMAP-Rule" id="MF_00375"/>
    </source>
</evidence>
<keyword id="KW-0963">Cytoplasm</keyword>
<keyword id="KW-0413">Isomerase</keyword>
<keyword id="KW-0627">Porphyrin biosynthesis</keyword>
<keyword id="KW-0663">Pyridoxal phosphate</keyword>
<reference key="1">
    <citation type="submission" date="2006-11" db="EMBL/GenBank/DDBJ databases">
        <title>Sequence of Campylobacter fetus subsp. fetus 82-40.</title>
        <authorList>
            <person name="Fouts D.E."/>
            <person name="Nelson K.E."/>
        </authorList>
    </citation>
    <scope>NUCLEOTIDE SEQUENCE [LARGE SCALE GENOMIC DNA]</scope>
    <source>
        <strain>82-40</strain>
    </source>
</reference>
<gene>
    <name evidence="1" type="primary">hemL</name>
    <name type="ordered locus">CFF8240_1176</name>
</gene>
<protein>
    <recommendedName>
        <fullName evidence="1">Glutamate-1-semialdehyde 2,1-aminomutase</fullName>
        <shortName evidence="1">GSA</shortName>
        <ecNumber evidence="1">5.4.3.8</ecNumber>
    </recommendedName>
    <alternativeName>
        <fullName evidence="1">Glutamate-1-semialdehyde aminotransferase</fullName>
        <shortName evidence="1">GSA-AT</shortName>
    </alternativeName>
</protein>
<organism>
    <name type="scientific">Campylobacter fetus subsp. fetus (strain 82-40)</name>
    <dbReference type="NCBI Taxonomy" id="360106"/>
    <lineage>
        <taxon>Bacteria</taxon>
        <taxon>Pseudomonadati</taxon>
        <taxon>Campylobacterota</taxon>
        <taxon>Epsilonproteobacteria</taxon>
        <taxon>Campylobacterales</taxon>
        <taxon>Campylobacteraceae</taxon>
        <taxon>Campylobacter</taxon>
    </lineage>
</organism>
<name>GSA_CAMFF</name>
<dbReference type="EC" id="5.4.3.8" evidence="1"/>
<dbReference type="EMBL" id="CP000487">
    <property type="protein sequence ID" value="ABK82975.1"/>
    <property type="molecule type" value="Genomic_DNA"/>
</dbReference>
<dbReference type="RefSeq" id="WP_002849830.1">
    <property type="nucleotide sequence ID" value="NC_008599.1"/>
</dbReference>
<dbReference type="SMR" id="A0RQ51"/>
<dbReference type="GeneID" id="61065001"/>
<dbReference type="KEGG" id="cff:CFF8240_1176"/>
<dbReference type="eggNOG" id="COG0001">
    <property type="taxonomic scope" value="Bacteria"/>
</dbReference>
<dbReference type="HOGENOM" id="CLU_016922_1_5_7"/>
<dbReference type="UniPathway" id="UPA00251">
    <property type="reaction ID" value="UER00317"/>
</dbReference>
<dbReference type="Proteomes" id="UP000000760">
    <property type="component" value="Chromosome"/>
</dbReference>
<dbReference type="GO" id="GO:0005737">
    <property type="term" value="C:cytoplasm"/>
    <property type="evidence" value="ECO:0007669"/>
    <property type="project" value="UniProtKB-SubCell"/>
</dbReference>
<dbReference type="GO" id="GO:0042286">
    <property type="term" value="F:glutamate-1-semialdehyde 2,1-aminomutase activity"/>
    <property type="evidence" value="ECO:0007669"/>
    <property type="project" value="UniProtKB-UniRule"/>
</dbReference>
<dbReference type="GO" id="GO:0030170">
    <property type="term" value="F:pyridoxal phosphate binding"/>
    <property type="evidence" value="ECO:0007669"/>
    <property type="project" value="InterPro"/>
</dbReference>
<dbReference type="GO" id="GO:0008483">
    <property type="term" value="F:transaminase activity"/>
    <property type="evidence" value="ECO:0007669"/>
    <property type="project" value="InterPro"/>
</dbReference>
<dbReference type="GO" id="GO:0006782">
    <property type="term" value="P:protoporphyrinogen IX biosynthetic process"/>
    <property type="evidence" value="ECO:0007669"/>
    <property type="project" value="UniProtKB-UniRule"/>
</dbReference>
<dbReference type="CDD" id="cd00610">
    <property type="entry name" value="OAT_like"/>
    <property type="match status" value="1"/>
</dbReference>
<dbReference type="FunFam" id="3.40.640.10:FF:000021">
    <property type="entry name" value="Glutamate-1-semialdehyde 2,1-aminomutase"/>
    <property type="match status" value="1"/>
</dbReference>
<dbReference type="Gene3D" id="3.90.1150.10">
    <property type="entry name" value="Aspartate Aminotransferase, domain 1"/>
    <property type="match status" value="1"/>
</dbReference>
<dbReference type="Gene3D" id="3.40.640.10">
    <property type="entry name" value="Type I PLP-dependent aspartate aminotransferase-like (Major domain)"/>
    <property type="match status" value="1"/>
</dbReference>
<dbReference type="HAMAP" id="MF_00375">
    <property type="entry name" value="HemL_aminotrans_3"/>
    <property type="match status" value="1"/>
</dbReference>
<dbReference type="InterPro" id="IPR004639">
    <property type="entry name" value="4pyrrol_synth_GluAld_NH2Trfase"/>
</dbReference>
<dbReference type="InterPro" id="IPR005814">
    <property type="entry name" value="Aminotrans_3"/>
</dbReference>
<dbReference type="InterPro" id="IPR049704">
    <property type="entry name" value="Aminotrans_3_PPA_site"/>
</dbReference>
<dbReference type="InterPro" id="IPR015424">
    <property type="entry name" value="PyrdxlP-dep_Trfase"/>
</dbReference>
<dbReference type="InterPro" id="IPR015421">
    <property type="entry name" value="PyrdxlP-dep_Trfase_major"/>
</dbReference>
<dbReference type="InterPro" id="IPR015422">
    <property type="entry name" value="PyrdxlP-dep_Trfase_small"/>
</dbReference>
<dbReference type="NCBIfam" id="TIGR00713">
    <property type="entry name" value="hemL"/>
    <property type="match status" value="1"/>
</dbReference>
<dbReference type="NCBIfam" id="NF000818">
    <property type="entry name" value="PRK00062.1"/>
    <property type="match status" value="1"/>
</dbReference>
<dbReference type="PANTHER" id="PTHR43713">
    <property type="entry name" value="GLUTAMATE-1-SEMIALDEHYDE 2,1-AMINOMUTASE"/>
    <property type="match status" value="1"/>
</dbReference>
<dbReference type="PANTHER" id="PTHR43713:SF3">
    <property type="entry name" value="GLUTAMATE-1-SEMIALDEHYDE 2,1-AMINOMUTASE 1, CHLOROPLASTIC-RELATED"/>
    <property type="match status" value="1"/>
</dbReference>
<dbReference type="Pfam" id="PF00202">
    <property type="entry name" value="Aminotran_3"/>
    <property type="match status" value="1"/>
</dbReference>
<dbReference type="SUPFAM" id="SSF53383">
    <property type="entry name" value="PLP-dependent transferases"/>
    <property type="match status" value="1"/>
</dbReference>
<dbReference type="PROSITE" id="PS00600">
    <property type="entry name" value="AA_TRANSFER_CLASS_3"/>
    <property type="match status" value="1"/>
</dbReference>
<sequence>MTNKNAFLEAKTYIPGGVDSPVRAFGSVGSDPVFIDHGNGEFLYDIEGNEYIDYVLSWGPLIFGHCDSDIEEAVIKTAKKGLSFGAPCLLETALAKLVLSKFPWLGKIRFVSSGTEATMSAIRLARGYSKKNGIIKFEGCYHGHSDSLLVKAGSGATTFGYSSSLGVPEDIVKNTHIAIYNDIQSVEQCFKNEDIGVIIVEPIAGNMGLVPADQVFLDALRKLCDEYGAVLIFDEVMSGFRASATGSYEFNKIQADIITFGKVIGGGMSAAAFAAKNEIMEMISPLGGVYQAGTLSGNPVAMAAGLASLSKIYNSPNLYKDLENKSKFIVEALENSAKKAGIALQTEVRGSMWGYFFNDRPVKNYKDALNSDTKMFAKFHAQMIKRGIYLAPSQFETGFVCDKLSQKSLEKTANAIEESFKAL</sequence>
<feature type="chain" id="PRO_0000300899" description="Glutamate-1-semialdehyde 2,1-aminomutase">
    <location>
        <begin position="1"/>
        <end position="423"/>
    </location>
</feature>
<feature type="modified residue" description="N6-(pyridoxal phosphate)lysine" evidence="1">
    <location>
        <position position="262"/>
    </location>
</feature>
<accession>A0RQ51</accession>
<comment type="catalytic activity">
    <reaction evidence="1">
        <text>(S)-4-amino-5-oxopentanoate = 5-aminolevulinate</text>
        <dbReference type="Rhea" id="RHEA:14265"/>
        <dbReference type="ChEBI" id="CHEBI:57501"/>
        <dbReference type="ChEBI" id="CHEBI:356416"/>
        <dbReference type="EC" id="5.4.3.8"/>
    </reaction>
</comment>
<comment type="cofactor">
    <cofactor evidence="1">
        <name>pyridoxal 5'-phosphate</name>
        <dbReference type="ChEBI" id="CHEBI:597326"/>
    </cofactor>
</comment>
<comment type="pathway">
    <text evidence="1">Porphyrin-containing compound metabolism; protoporphyrin-IX biosynthesis; 5-aminolevulinate from L-glutamyl-tRNA(Glu): step 2/2.</text>
</comment>
<comment type="subunit">
    <text evidence="1">Homodimer.</text>
</comment>
<comment type="subcellular location">
    <subcellularLocation>
        <location evidence="1">Cytoplasm</location>
    </subcellularLocation>
</comment>
<comment type="similarity">
    <text evidence="1">Belongs to the class-III pyridoxal-phosphate-dependent aminotransferase family. HemL subfamily.</text>
</comment>